<comment type="function">
    <text evidence="1">Cell wall formation. Catalyzes the addition of glutamate to the nucleotide precursor UDP-N-acetylmuramoyl-L-alanine (UMA).</text>
</comment>
<comment type="catalytic activity">
    <reaction evidence="1">
        <text>UDP-N-acetyl-alpha-D-muramoyl-L-alanine + D-glutamate + ATP = UDP-N-acetyl-alpha-D-muramoyl-L-alanyl-D-glutamate + ADP + phosphate + H(+)</text>
        <dbReference type="Rhea" id="RHEA:16429"/>
        <dbReference type="ChEBI" id="CHEBI:15378"/>
        <dbReference type="ChEBI" id="CHEBI:29986"/>
        <dbReference type="ChEBI" id="CHEBI:30616"/>
        <dbReference type="ChEBI" id="CHEBI:43474"/>
        <dbReference type="ChEBI" id="CHEBI:83898"/>
        <dbReference type="ChEBI" id="CHEBI:83900"/>
        <dbReference type="ChEBI" id="CHEBI:456216"/>
        <dbReference type="EC" id="6.3.2.9"/>
    </reaction>
</comment>
<comment type="pathway">
    <text evidence="1">Cell wall biogenesis; peptidoglycan biosynthesis.</text>
</comment>
<comment type="subcellular location">
    <subcellularLocation>
        <location evidence="1">Cytoplasm</location>
    </subcellularLocation>
</comment>
<comment type="similarity">
    <text evidence="1">Belongs to the MurCDEF family.</text>
</comment>
<accession>Q326E7</accession>
<proteinExistence type="inferred from homology"/>
<name>MURD_SHIBS</name>
<gene>
    <name evidence="1" type="primary">murD</name>
    <name type="ordered locus">SBO_0076</name>
</gene>
<dbReference type="EC" id="6.3.2.9" evidence="1"/>
<dbReference type="EMBL" id="CP000036">
    <property type="protein sequence ID" value="ABB64811.1"/>
    <property type="molecule type" value="Genomic_DNA"/>
</dbReference>
<dbReference type="RefSeq" id="WP_000796468.1">
    <property type="nucleotide sequence ID" value="NC_007613.1"/>
</dbReference>
<dbReference type="SMR" id="Q326E7"/>
<dbReference type="KEGG" id="sbo:SBO_0076"/>
<dbReference type="HOGENOM" id="CLU_032540_1_0_6"/>
<dbReference type="UniPathway" id="UPA00219"/>
<dbReference type="Proteomes" id="UP000007067">
    <property type="component" value="Chromosome"/>
</dbReference>
<dbReference type="GO" id="GO:0005737">
    <property type="term" value="C:cytoplasm"/>
    <property type="evidence" value="ECO:0007669"/>
    <property type="project" value="UniProtKB-SubCell"/>
</dbReference>
<dbReference type="GO" id="GO:0005524">
    <property type="term" value="F:ATP binding"/>
    <property type="evidence" value="ECO:0007669"/>
    <property type="project" value="UniProtKB-UniRule"/>
</dbReference>
<dbReference type="GO" id="GO:0008764">
    <property type="term" value="F:UDP-N-acetylmuramoylalanine-D-glutamate ligase activity"/>
    <property type="evidence" value="ECO:0007669"/>
    <property type="project" value="UniProtKB-UniRule"/>
</dbReference>
<dbReference type="GO" id="GO:0051301">
    <property type="term" value="P:cell division"/>
    <property type="evidence" value="ECO:0007669"/>
    <property type="project" value="UniProtKB-KW"/>
</dbReference>
<dbReference type="GO" id="GO:0071555">
    <property type="term" value="P:cell wall organization"/>
    <property type="evidence" value="ECO:0007669"/>
    <property type="project" value="UniProtKB-KW"/>
</dbReference>
<dbReference type="GO" id="GO:0009252">
    <property type="term" value="P:peptidoglycan biosynthetic process"/>
    <property type="evidence" value="ECO:0007669"/>
    <property type="project" value="UniProtKB-UniRule"/>
</dbReference>
<dbReference type="GO" id="GO:0008360">
    <property type="term" value="P:regulation of cell shape"/>
    <property type="evidence" value="ECO:0007669"/>
    <property type="project" value="UniProtKB-KW"/>
</dbReference>
<dbReference type="FunFam" id="3.40.1190.10:FF:000002">
    <property type="entry name" value="UDP-N-acetylmuramoylalanine--D-glutamate ligase"/>
    <property type="match status" value="1"/>
</dbReference>
<dbReference type="FunFam" id="3.40.50.720:FF:000126">
    <property type="entry name" value="UDP-N-acetylmuramoylalanine--D-glutamate ligase"/>
    <property type="match status" value="1"/>
</dbReference>
<dbReference type="FunFam" id="3.90.190.20:FF:000003">
    <property type="entry name" value="UDP-N-acetylmuramoylalanine--D-glutamate ligase"/>
    <property type="match status" value="1"/>
</dbReference>
<dbReference type="Gene3D" id="3.90.190.20">
    <property type="entry name" value="Mur ligase, C-terminal domain"/>
    <property type="match status" value="1"/>
</dbReference>
<dbReference type="Gene3D" id="3.40.1190.10">
    <property type="entry name" value="Mur-like, catalytic domain"/>
    <property type="match status" value="1"/>
</dbReference>
<dbReference type="Gene3D" id="3.40.50.720">
    <property type="entry name" value="NAD(P)-binding Rossmann-like Domain"/>
    <property type="match status" value="1"/>
</dbReference>
<dbReference type="HAMAP" id="MF_00639">
    <property type="entry name" value="MurD"/>
    <property type="match status" value="1"/>
</dbReference>
<dbReference type="InterPro" id="IPR036565">
    <property type="entry name" value="Mur-like_cat_sf"/>
</dbReference>
<dbReference type="InterPro" id="IPR004101">
    <property type="entry name" value="Mur_ligase_C"/>
</dbReference>
<dbReference type="InterPro" id="IPR036615">
    <property type="entry name" value="Mur_ligase_C_dom_sf"/>
</dbReference>
<dbReference type="InterPro" id="IPR013221">
    <property type="entry name" value="Mur_ligase_cen"/>
</dbReference>
<dbReference type="InterPro" id="IPR005762">
    <property type="entry name" value="MurD"/>
</dbReference>
<dbReference type="NCBIfam" id="TIGR01087">
    <property type="entry name" value="murD"/>
    <property type="match status" value="1"/>
</dbReference>
<dbReference type="PANTHER" id="PTHR43692">
    <property type="entry name" value="UDP-N-ACETYLMURAMOYLALANINE--D-GLUTAMATE LIGASE"/>
    <property type="match status" value="1"/>
</dbReference>
<dbReference type="PANTHER" id="PTHR43692:SF1">
    <property type="entry name" value="UDP-N-ACETYLMURAMOYLALANINE--D-GLUTAMATE LIGASE"/>
    <property type="match status" value="1"/>
</dbReference>
<dbReference type="Pfam" id="PF02875">
    <property type="entry name" value="Mur_ligase_C"/>
    <property type="match status" value="1"/>
</dbReference>
<dbReference type="Pfam" id="PF08245">
    <property type="entry name" value="Mur_ligase_M"/>
    <property type="match status" value="1"/>
</dbReference>
<dbReference type="Pfam" id="PF21799">
    <property type="entry name" value="MurD-like_N"/>
    <property type="match status" value="1"/>
</dbReference>
<dbReference type="SUPFAM" id="SSF51984">
    <property type="entry name" value="MurCD N-terminal domain"/>
    <property type="match status" value="1"/>
</dbReference>
<dbReference type="SUPFAM" id="SSF53623">
    <property type="entry name" value="MurD-like peptide ligases, catalytic domain"/>
    <property type="match status" value="1"/>
</dbReference>
<dbReference type="SUPFAM" id="SSF53244">
    <property type="entry name" value="MurD-like peptide ligases, peptide-binding domain"/>
    <property type="match status" value="1"/>
</dbReference>
<feature type="chain" id="PRO_0000257236" description="UDP-N-acetylmuramoylalanine--D-glutamate ligase">
    <location>
        <begin position="1"/>
        <end position="438"/>
    </location>
</feature>
<feature type="binding site" evidence="1">
    <location>
        <begin position="112"/>
        <end position="118"/>
    </location>
    <ligand>
        <name>ATP</name>
        <dbReference type="ChEBI" id="CHEBI:30616"/>
    </ligand>
</feature>
<sequence length="438" mass="46921">MADYQGKNVVIIGLGLTGLSCVDFFLARGVTPRVMDTRMTPPGLDKLPEAVERHTGSLNDEWLMAADLIVASPGIALAHPSLSAAADAGIEIVGDIELFCREAQAPIVAITGSNGKSTVTTLVGEMAKAAGVNVGVGGNIGLPALMLLDAECELYVLELSSFQLETTSSLQAVAATILNVTEDHMDRYPFGLQQYRAAKLRIYENAKVCVVNADDALTMPIRGADERCVSFGVNMGDYHLNHQQGETWLRVKGEKVLNVKEMKLSGQHNYTNALAALALADAAGLPRASSLKALTTFTGLPHRFEVVLEHNGVRWINDSKATNVGSTEAALNGLQVDGTLHLLLGGDGKSADFSPLARYLNGDNVRLYCFGRDGAQLAALRPEVAEQTETMEQAMRLLAPRVQPGDMVLLSPACASLDQFKNFEQRGNEFARLAKELG</sequence>
<evidence type="ECO:0000255" key="1">
    <source>
        <dbReference type="HAMAP-Rule" id="MF_00639"/>
    </source>
</evidence>
<reference key="1">
    <citation type="journal article" date="2005" name="Nucleic Acids Res.">
        <title>Genome dynamics and diversity of Shigella species, the etiologic agents of bacillary dysentery.</title>
        <authorList>
            <person name="Yang F."/>
            <person name="Yang J."/>
            <person name="Zhang X."/>
            <person name="Chen L."/>
            <person name="Jiang Y."/>
            <person name="Yan Y."/>
            <person name="Tang X."/>
            <person name="Wang J."/>
            <person name="Xiong Z."/>
            <person name="Dong J."/>
            <person name="Xue Y."/>
            <person name="Zhu Y."/>
            <person name="Xu X."/>
            <person name="Sun L."/>
            <person name="Chen S."/>
            <person name="Nie H."/>
            <person name="Peng J."/>
            <person name="Xu J."/>
            <person name="Wang Y."/>
            <person name="Yuan Z."/>
            <person name="Wen Y."/>
            <person name="Yao Z."/>
            <person name="Shen Y."/>
            <person name="Qiang B."/>
            <person name="Hou Y."/>
            <person name="Yu J."/>
            <person name="Jin Q."/>
        </authorList>
    </citation>
    <scope>NUCLEOTIDE SEQUENCE [LARGE SCALE GENOMIC DNA]</scope>
    <source>
        <strain>Sb227</strain>
    </source>
</reference>
<organism>
    <name type="scientific">Shigella boydii serotype 4 (strain Sb227)</name>
    <dbReference type="NCBI Taxonomy" id="300268"/>
    <lineage>
        <taxon>Bacteria</taxon>
        <taxon>Pseudomonadati</taxon>
        <taxon>Pseudomonadota</taxon>
        <taxon>Gammaproteobacteria</taxon>
        <taxon>Enterobacterales</taxon>
        <taxon>Enterobacteriaceae</taxon>
        <taxon>Shigella</taxon>
    </lineage>
</organism>
<keyword id="KW-0067">ATP-binding</keyword>
<keyword id="KW-0131">Cell cycle</keyword>
<keyword id="KW-0132">Cell division</keyword>
<keyword id="KW-0133">Cell shape</keyword>
<keyword id="KW-0961">Cell wall biogenesis/degradation</keyword>
<keyword id="KW-0963">Cytoplasm</keyword>
<keyword id="KW-0436">Ligase</keyword>
<keyword id="KW-0547">Nucleotide-binding</keyword>
<keyword id="KW-0573">Peptidoglycan synthesis</keyword>
<protein>
    <recommendedName>
        <fullName evidence="1">UDP-N-acetylmuramoylalanine--D-glutamate ligase</fullName>
        <ecNumber evidence="1">6.3.2.9</ecNumber>
    </recommendedName>
    <alternativeName>
        <fullName evidence="1">D-glutamic acid-adding enzyme</fullName>
    </alternativeName>
    <alternativeName>
        <fullName evidence="1">UDP-N-acetylmuramoyl-L-alanyl-D-glutamate synthetase</fullName>
    </alternativeName>
</protein>